<feature type="chain" id="PRO_0000095434" description="Tyrosine recombinase XerD">
    <location>
        <begin position="1"/>
        <end position="299"/>
    </location>
</feature>
<feature type="domain" description="Core-binding (CB)" evidence="3">
    <location>
        <begin position="3"/>
        <end position="88"/>
    </location>
</feature>
<feature type="domain" description="Tyr recombinase" evidence="2">
    <location>
        <begin position="109"/>
        <end position="293"/>
    </location>
</feature>
<feature type="active site" evidence="1">
    <location>
        <position position="149"/>
    </location>
</feature>
<feature type="active site" evidence="1">
    <location>
        <position position="173"/>
    </location>
</feature>
<feature type="active site" evidence="1">
    <location>
        <position position="245"/>
    </location>
</feature>
<feature type="active site" evidence="1">
    <location>
        <position position="248"/>
    </location>
</feature>
<feature type="active site" evidence="1">
    <location>
        <position position="271"/>
    </location>
</feature>
<feature type="active site" description="O-(3'-phospho-DNA)-tyrosine intermediate" evidence="1">
    <location>
        <position position="280"/>
    </location>
</feature>
<sequence>MKQQDNPLIEQFLDALWLERNLAENTLASYRLDLHALVGWLTHHNSDLLRASPQDLQSFLAERIEGGYKATSSARLLSAMRRLFQYLYREKLREDDPTALLSSPKLPQRLPKDLSEAQVDALLNSPNVDIPLELRDKAMLEVLYATGLRVSELVGLTISDVSLRQGVVRVIGKGNKERLVPLGEEAVYWIENYMEHGRPWLVNGASLDVLFPSNRSQQMTRQTFWHRIKHYAILAGIDSERLSPHVLRHAFATHLLNHGADLRVVQMLLGHSDLSTTQIYTHVATERLRQLHQQHHPRA</sequence>
<keyword id="KW-0131">Cell cycle</keyword>
<keyword id="KW-0132">Cell division</keyword>
<keyword id="KW-0159">Chromosome partition</keyword>
<keyword id="KW-0963">Cytoplasm</keyword>
<keyword id="KW-0229">DNA integration</keyword>
<keyword id="KW-0233">DNA recombination</keyword>
<keyword id="KW-0238">DNA-binding</keyword>
<keyword id="KW-1185">Reference proteome</keyword>
<gene>
    <name evidence="1" type="primary">xerD</name>
    <name type="ordered locus">YPO0892</name>
    <name type="ordered locus">y3276</name>
    <name type="ordered locus">YP_3588</name>
</gene>
<name>XERD_YERPE</name>
<evidence type="ECO:0000255" key="1">
    <source>
        <dbReference type="HAMAP-Rule" id="MF_01807"/>
    </source>
</evidence>
<evidence type="ECO:0000255" key="2">
    <source>
        <dbReference type="PROSITE-ProRule" id="PRU01246"/>
    </source>
</evidence>
<evidence type="ECO:0000255" key="3">
    <source>
        <dbReference type="PROSITE-ProRule" id="PRU01248"/>
    </source>
</evidence>
<protein>
    <recommendedName>
        <fullName evidence="1">Tyrosine recombinase XerD</fullName>
    </recommendedName>
</protein>
<proteinExistence type="inferred from homology"/>
<accession>Q8ZHK1</accession>
<accession>Q0WIE8</accession>
<dbReference type="EMBL" id="AL590842">
    <property type="protein sequence ID" value="CAL19559.1"/>
    <property type="molecule type" value="Genomic_DNA"/>
</dbReference>
<dbReference type="EMBL" id="AE009952">
    <property type="protein sequence ID" value="AAM86826.1"/>
    <property type="molecule type" value="Genomic_DNA"/>
</dbReference>
<dbReference type="EMBL" id="AE017042">
    <property type="protein sequence ID" value="AAS63739.1"/>
    <property type="molecule type" value="Genomic_DNA"/>
</dbReference>
<dbReference type="PIR" id="AE0109">
    <property type="entry name" value="AE0109"/>
</dbReference>
<dbReference type="RefSeq" id="WP_002209933.1">
    <property type="nucleotide sequence ID" value="NZ_WUCM01000038.1"/>
</dbReference>
<dbReference type="RefSeq" id="YP_002345940.1">
    <property type="nucleotide sequence ID" value="NC_003143.1"/>
</dbReference>
<dbReference type="SMR" id="Q8ZHK1"/>
<dbReference type="STRING" id="214092.YPO0892"/>
<dbReference type="PaxDb" id="214092-YPO0892"/>
<dbReference type="DNASU" id="1148223"/>
<dbReference type="EnsemblBacteria" id="AAS63739">
    <property type="protein sequence ID" value="AAS63739"/>
    <property type="gene ID" value="YP_3588"/>
</dbReference>
<dbReference type="GeneID" id="96662491"/>
<dbReference type="KEGG" id="ype:YPO0892"/>
<dbReference type="KEGG" id="ypk:y3276"/>
<dbReference type="KEGG" id="ypm:YP_3588"/>
<dbReference type="PATRIC" id="fig|214092.21.peg.1163"/>
<dbReference type="eggNOG" id="COG4974">
    <property type="taxonomic scope" value="Bacteria"/>
</dbReference>
<dbReference type="HOGENOM" id="CLU_027562_9_0_6"/>
<dbReference type="OMA" id="FWYLIKR"/>
<dbReference type="OrthoDB" id="9801717at2"/>
<dbReference type="Proteomes" id="UP000000815">
    <property type="component" value="Chromosome"/>
</dbReference>
<dbReference type="Proteomes" id="UP000001019">
    <property type="component" value="Chromosome"/>
</dbReference>
<dbReference type="Proteomes" id="UP000002490">
    <property type="component" value="Chromosome"/>
</dbReference>
<dbReference type="GO" id="GO:0005737">
    <property type="term" value="C:cytoplasm"/>
    <property type="evidence" value="ECO:0007669"/>
    <property type="project" value="UniProtKB-SubCell"/>
</dbReference>
<dbReference type="GO" id="GO:0048476">
    <property type="term" value="C:Holliday junction resolvase complex"/>
    <property type="evidence" value="ECO:0000318"/>
    <property type="project" value="GO_Central"/>
</dbReference>
<dbReference type="GO" id="GO:0003677">
    <property type="term" value="F:DNA binding"/>
    <property type="evidence" value="ECO:0000318"/>
    <property type="project" value="GO_Central"/>
</dbReference>
<dbReference type="GO" id="GO:0009037">
    <property type="term" value="F:tyrosine-based site-specific recombinase activity"/>
    <property type="evidence" value="ECO:0000318"/>
    <property type="project" value="GO_Central"/>
</dbReference>
<dbReference type="GO" id="GO:0051301">
    <property type="term" value="P:cell division"/>
    <property type="evidence" value="ECO:0007669"/>
    <property type="project" value="UniProtKB-KW"/>
</dbReference>
<dbReference type="GO" id="GO:0007059">
    <property type="term" value="P:chromosome segregation"/>
    <property type="evidence" value="ECO:0000318"/>
    <property type="project" value="GO_Central"/>
</dbReference>
<dbReference type="GO" id="GO:0006310">
    <property type="term" value="P:DNA recombination"/>
    <property type="evidence" value="ECO:0000318"/>
    <property type="project" value="GO_Central"/>
</dbReference>
<dbReference type="GO" id="GO:0006313">
    <property type="term" value="P:DNA transposition"/>
    <property type="evidence" value="ECO:0007669"/>
    <property type="project" value="UniProtKB-UniRule"/>
</dbReference>
<dbReference type="GO" id="GO:0071139">
    <property type="term" value="P:resolution of DNA recombination intermediates"/>
    <property type="evidence" value="ECO:0000318"/>
    <property type="project" value="GO_Central"/>
</dbReference>
<dbReference type="CDD" id="cd00798">
    <property type="entry name" value="INT_XerDC_C"/>
    <property type="match status" value="1"/>
</dbReference>
<dbReference type="FunFam" id="1.10.443.10:FF:000001">
    <property type="entry name" value="Tyrosine recombinase XerD"/>
    <property type="match status" value="1"/>
</dbReference>
<dbReference type="Gene3D" id="1.10.150.130">
    <property type="match status" value="1"/>
</dbReference>
<dbReference type="Gene3D" id="1.10.443.10">
    <property type="entry name" value="Intergrase catalytic core"/>
    <property type="match status" value="1"/>
</dbReference>
<dbReference type="HAMAP" id="MF_01808">
    <property type="entry name" value="Recomb_XerC_XerD"/>
    <property type="match status" value="1"/>
</dbReference>
<dbReference type="HAMAP" id="MF_01807">
    <property type="entry name" value="Recomb_XerD"/>
    <property type="match status" value="1"/>
</dbReference>
<dbReference type="InterPro" id="IPR044068">
    <property type="entry name" value="CB"/>
</dbReference>
<dbReference type="InterPro" id="IPR011010">
    <property type="entry name" value="DNA_brk_join_enz"/>
</dbReference>
<dbReference type="InterPro" id="IPR013762">
    <property type="entry name" value="Integrase-like_cat_sf"/>
</dbReference>
<dbReference type="InterPro" id="IPR002104">
    <property type="entry name" value="Integrase_catalytic"/>
</dbReference>
<dbReference type="InterPro" id="IPR010998">
    <property type="entry name" value="Integrase_recombinase_N"/>
</dbReference>
<dbReference type="InterPro" id="IPR004107">
    <property type="entry name" value="Integrase_SAM-like_N"/>
</dbReference>
<dbReference type="InterPro" id="IPR011932">
    <property type="entry name" value="Recomb_XerD"/>
</dbReference>
<dbReference type="InterPro" id="IPR023009">
    <property type="entry name" value="Tyrosine_recombinase_XerC/XerD"/>
</dbReference>
<dbReference type="InterPro" id="IPR050090">
    <property type="entry name" value="Tyrosine_recombinase_XerCD"/>
</dbReference>
<dbReference type="NCBIfam" id="NF001399">
    <property type="entry name" value="PRK00283.1"/>
    <property type="match status" value="1"/>
</dbReference>
<dbReference type="NCBIfam" id="TIGR02225">
    <property type="entry name" value="recomb_XerD"/>
    <property type="match status" value="1"/>
</dbReference>
<dbReference type="PANTHER" id="PTHR30349">
    <property type="entry name" value="PHAGE INTEGRASE-RELATED"/>
    <property type="match status" value="1"/>
</dbReference>
<dbReference type="PANTHER" id="PTHR30349:SF90">
    <property type="entry name" value="TYROSINE RECOMBINASE XERD"/>
    <property type="match status" value="1"/>
</dbReference>
<dbReference type="Pfam" id="PF02899">
    <property type="entry name" value="Phage_int_SAM_1"/>
    <property type="match status" value="1"/>
</dbReference>
<dbReference type="Pfam" id="PF00589">
    <property type="entry name" value="Phage_integrase"/>
    <property type="match status" value="1"/>
</dbReference>
<dbReference type="SUPFAM" id="SSF56349">
    <property type="entry name" value="DNA breaking-rejoining enzymes"/>
    <property type="match status" value="1"/>
</dbReference>
<dbReference type="SUPFAM" id="SSF47823">
    <property type="entry name" value="lambda integrase-like, N-terminal domain"/>
    <property type="match status" value="1"/>
</dbReference>
<dbReference type="PROSITE" id="PS51900">
    <property type="entry name" value="CB"/>
    <property type="match status" value="1"/>
</dbReference>
<dbReference type="PROSITE" id="PS51898">
    <property type="entry name" value="TYR_RECOMBINASE"/>
    <property type="match status" value="1"/>
</dbReference>
<reference key="1">
    <citation type="journal article" date="2001" name="Nature">
        <title>Genome sequence of Yersinia pestis, the causative agent of plague.</title>
        <authorList>
            <person name="Parkhill J."/>
            <person name="Wren B.W."/>
            <person name="Thomson N.R."/>
            <person name="Titball R.W."/>
            <person name="Holden M.T.G."/>
            <person name="Prentice M.B."/>
            <person name="Sebaihia M."/>
            <person name="James K.D."/>
            <person name="Churcher C.M."/>
            <person name="Mungall K.L."/>
            <person name="Baker S."/>
            <person name="Basham D."/>
            <person name="Bentley S.D."/>
            <person name="Brooks K."/>
            <person name="Cerdeno-Tarraga A.-M."/>
            <person name="Chillingworth T."/>
            <person name="Cronin A."/>
            <person name="Davies R.M."/>
            <person name="Davis P."/>
            <person name="Dougan G."/>
            <person name="Feltwell T."/>
            <person name="Hamlin N."/>
            <person name="Holroyd S."/>
            <person name="Jagels K."/>
            <person name="Karlyshev A.V."/>
            <person name="Leather S."/>
            <person name="Moule S."/>
            <person name="Oyston P.C.F."/>
            <person name="Quail M.A."/>
            <person name="Rutherford K.M."/>
            <person name="Simmonds M."/>
            <person name="Skelton J."/>
            <person name="Stevens K."/>
            <person name="Whitehead S."/>
            <person name="Barrell B.G."/>
        </authorList>
    </citation>
    <scope>NUCLEOTIDE SEQUENCE [LARGE SCALE GENOMIC DNA]</scope>
    <source>
        <strain>CO-92 / Biovar Orientalis</strain>
    </source>
</reference>
<reference key="2">
    <citation type="journal article" date="2002" name="J. Bacteriol.">
        <title>Genome sequence of Yersinia pestis KIM.</title>
        <authorList>
            <person name="Deng W."/>
            <person name="Burland V."/>
            <person name="Plunkett G. III"/>
            <person name="Boutin A."/>
            <person name="Mayhew G.F."/>
            <person name="Liss P."/>
            <person name="Perna N.T."/>
            <person name="Rose D.J."/>
            <person name="Mau B."/>
            <person name="Zhou S."/>
            <person name="Schwartz D.C."/>
            <person name="Fetherston J.D."/>
            <person name="Lindler L.E."/>
            <person name="Brubaker R.R."/>
            <person name="Plano G.V."/>
            <person name="Straley S.C."/>
            <person name="McDonough K.A."/>
            <person name="Nilles M.L."/>
            <person name="Matson J.S."/>
            <person name="Blattner F.R."/>
            <person name="Perry R.D."/>
        </authorList>
    </citation>
    <scope>NUCLEOTIDE SEQUENCE [LARGE SCALE GENOMIC DNA]</scope>
    <source>
        <strain>KIM10+ / Biovar Mediaevalis</strain>
    </source>
</reference>
<reference key="3">
    <citation type="journal article" date="2004" name="DNA Res.">
        <title>Complete genome sequence of Yersinia pestis strain 91001, an isolate avirulent to humans.</title>
        <authorList>
            <person name="Song Y."/>
            <person name="Tong Z."/>
            <person name="Wang J."/>
            <person name="Wang L."/>
            <person name="Guo Z."/>
            <person name="Han Y."/>
            <person name="Zhang J."/>
            <person name="Pei D."/>
            <person name="Zhou D."/>
            <person name="Qin H."/>
            <person name="Pang X."/>
            <person name="Han Y."/>
            <person name="Zhai J."/>
            <person name="Li M."/>
            <person name="Cui B."/>
            <person name="Qi Z."/>
            <person name="Jin L."/>
            <person name="Dai R."/>
            <person name="Chen F."/>
            <person name="Li S."/>
            <person name="Ye C."/>
            <person name="Du Z."/>
            <person name="Lin W."/>
            <person name="Wang J."/>
            <person name="Yu J."/>
            <person name="Yang H."/>
            <person name="Wang J."/>
            <person name="Huang P."/>
            <person name="Yang R."/>
        </authorList>
    </citation>
    <scope>NUCLEOTIDE SEQUENCE [LARGE SCALE GENOMIC DNA]</scope>
    <source>
        <strain>91001 / Biovar Mediaevalis</strain>
    </source>
</reference>
<organism>
    <name type="scientific">Yersinia pestis</name>
    <dbReference type="NCBI Taxonomy" id="632"/>
    <lineage>
        <taxon>Bacteria</taxon>
        <taxon>Pseudomonadati</taxon>
        <taxon>Pseudomonadota</taxon>
        <taxon>Gammaproteobacteria</taxon>
        <taxon>Enterobacterales</taxon>
        <taxon>Yersiniaceae</taxon>
        <taxon>Yersinia</taxon>
    </lineage>
</organism>
<comment type="function">
    <text evidence="1">Site-specific tyrosine recombinase, which acts by catalyzing the cutting and rejoining of the recombining DNA molecules. Binds cooperatively to specific DNA consensus sequences that are separated from XerC binding sites by a short central region, forming the heterotetrameric XerC-XerD complex that recombines DNA substrates. The complex is essential to convert dimers of the bacterial chromosome into monomers to permit their segregation at cell division. It also contributes to the segregational stability of plasmids. In the complex XerD specifically exchanges the bottom DNA strands.</text>
</comment>
<comment type="activity regulation">
    <text evidence="1">FtsK may regulate the catalytic switch between XerC and XerD in the heterotetrameric complex during the two steps of the recombination process.</text>
</comment>
<comment type="subunit">
    <text evidence="1">Forms a cyclic heterotetrameric complex composed of two molecules of XerC and two molecules of XerD, in which XerC interacts with XerD via its C-terminal region, XerD interacts with XerC via its C-terminal region and so on.</text>
</comment>
<comment type="subcellular location">
    <subcellularLocation>
        <location evidence="1">Cytoplasm</location>
    </subcellularLocation>
</comment>
<comment type="similarity">
    <text evidence="1">Belongs to the 'phage' integrase family. XerD subfamily.</text>
</comment>